<protein>
    <recommendedName>
        <fullName evidence="1">Ribosomal RNA small subunit methyltransferase A</fullName>
        <ecNumber evidence="1">2.1.1.182</ecNumber>
    </recommendedName>
    <alternativeName>
        <fullName evidence="1">16S rRNA (adenine(1518)-N(6)/adenine(1519)-N(6))-dimethyltransferase</fullName>
    </alternativeName>
    <alternativeName>
        <fullName evidence="1">16S rRNA dimethyladenosine transferase</fullName>
    </alternativeName>
    <alternativeName>
        <fullName evidence="1">16S rRNA dimethylase</fullName>
    </alternativeName>
    <alternativeName>
        <fullName evidence="1">S-adenosylmethionine-6-N', N'-adenosyl(rRNA) dimethyltransferase</fullName>
    </alternativeName>
</protein>
<accession>B9KIG4</accession>
<comment type="function">
    <text evidence="1">Specifically dimethylates two adjacent adenosines (A1518 and A1519) in the loop of a conserved hairpin near the 3'-end of 16S rRNA in the 30S particle. May play a critical role in biogenesis of 30S subunits.</text>
</comment>
<comment type="catalytic activity">
    <reaction evidence="1">
        <text>adenosine(1518)/adenosine(1519) in 16S rRNA + 4 S-adenosyl-L-methionine = N(6)-dimethyladenosine(1518)/N(6)-dimethyladenosine(1519) in 16S rRNA + 4 S-adenosyl-L-homocysteine + 4 H(+)</text>
        <dbReference type="Rhea" id="RHEA:19609"/>
        <dbReference type="Rhea" id="RHEA-COMP:10232"/>
        <dbReference type="Rhea" id="RHEA-COMP:10233"/>
        <dbReference type="ChEBI" id="CHEBI:15378"/>
        <dbReference type="ChEBI" id="CHEBI:57856"/>
        <dbReference type="ChEBI" id="CHEBI:59789"/>
        <dbReference type="ChEBI" id="CHEBI:74411"/>
        <dbReference type="ChEBI" id="CHEBI:74493"/>
        <dbReference type="EC" id="2.1.1.182"/>
    </reaction>
</comment>
<comment type="subcellular location">
    <subcellularLocation>
        <location evidence="1">Cytoplasm</location>
    </subcellularLocation>
</comment>
<comment type="similarity">
    <text evidence="1">Belongs to the class I-like SAM-binding methyltransferase superfamily. rRNA adenine N(6)-methyltransferase family. RsmA subfamily.</text>
</comment>
<dbReference type="EC" id="2.1.1.182" evidence="1"/>
<dbReference type="EMBL" id="CP001079">
    <property type="protein sequence ID" value="ACM49276.1"/>
    <property type="molecule type" value="Genomic_DNA"/>
</dbReference>
<dbReference type="RefSeq" id="WP_010267525.1">
    <property type="nucleotide sequence ID" value="NC_012026.1"/>
</dbReference>
<dbReference type="SMR" id="B9KIG4"/>
<dbReference type="STRING" id="320483.AMF_415"/>
<dbReference type="GeneID" id="7397956"/>
<dbReference type="KEGG" id="amf:AMF_415"/>
<dbReference type="eggNOG" id="COG0030">
    <property type="taxonomic scope" value="Bacteria"/>
</dbReference>
<dbReference type="HOGENOM" id="CLU_041220_0_1_5"/>
<dbReference type="Proteomes" id="UP000007307">
    <property type="component" value="Chromosome"/>
</dbReference>
<dbReference type="GO" id="GO:0005829">
    <property type="term" value="C:cytosol"/>
    <property type="evidence" value="ECO:0007669"/>
    <property type="project" value="TreeGrafter"/>
</dbReference>
<dbReference type="GO" id="GO:0052908">
    <property type="term" value="F:16S rRNA (adenine(1518)-N(6)/adenine(1519)-N(6))-dimethyltransferase activity"/>
    <property type="evidence" value="ECO:0007669"/>
    <property type="project" value="UniProtKB-EC"/>
</dbReference>
<dbReference type="GO" id="GO:0003723">
    <property type="term" value="F:RNA binding"/>
    <property type="evidence" value="ECO:0007669"/>
    <property type="project" value="UniProtKB-KW"/>
</dbReference>
<dbReference type="Gene3D" id="1.10.8.100">
    <property type="entry name" value="Ribosomal RNA adenine dimethylase-like, domain 2"/>
    <property type="match status" value="1"/>
</dbReference>
<dbReference type="Gene3D" id="3.40.50.150">
    <property type="entry name" value="Vaccinia Virus protein VP39"/>
    <property type="match status" value="1"/>
</dbReference>
<dbReference type="HAMAP" id="MF_00607">
    <property type="entry name" value="16SrRNA_methyltr_A"/>
    <property type="match status" value="1"/>
</dbReference>
<dbReference type="InterPro" id="IPR001737">
    <property type="entry name" value="KsgA/Erm"/>
</dbReference>
<dbReference type="InterPro" id="IPR023165">
    <property type="entry name" value="rRNA_Ade_diMease-like_C"/>
</dbReference>
<dbReference type="InterPro" id="IPR020596">
    <property type="entry name" value="rRNA_Ade_Mease_Trfase_CS"/>
</dbReference>
<dbReference type="InterPro" id="IPR020598">
    <property type="entry name" value="rRNA_Ade_methylase_Trfase_N"/>
</dbReference>
<dbReference type="InterPro" id="IPR011530">
    <property type="entry name" value="rRNA_adenine_dimethylase"/>
</dbReference>
<dbReference type="InterPro" id="IPR029063">
    <property type="entry name" value="SAM-dependent_MTases_sf"/>
</dbReference>
<dbReference type="NCBIfam" id="TIGR00755">
    <property type="entry name" value="ksgA"/>
    <property type="match status" value="1"/>
</dbReference>
<dbReference type="PANTHER" id="PTHR11727">
    <property type="entry name" value="DIMETHYLADENOSINE TRANSFERASE"/>
    <property type="match status" value="1"/>
</dbReference>
<dbReference type="PANTHER" id="PTHR11727:SF7">
    <property type="entry name" value="DIMETHYLADENOSINE TRANSFERASE-RELATED"/>
    <property type="match status" value="1"/>
</dbReference>
<dbReference type="Pfam" id="PF00398">
    <property type="entry name" value="RrnaAD"/>
    <property type="match status" value="1"/>
</dbReference>
<dbReference type="SMART" id="SM00650">
    <property type="entry name" value="rADc"/>
    <property type="match status" value="1"/>
</dbReference>
<dbReference type="SUPFAM" id="SSF53335">
    <property type="entry name" value="S-adenosyl-L-methionine-dependent methyltransferases"/>
    <property type="match status" value="1"/>
</dbReference>
<dbReference type="PROSITE" id="PS01131">
    <property type="entry name" value="RRNA_A_DIMETH"/>
    <property type="match status" value="1"/>
</dbReference>
<dbReference type="PROSITE" id="PS51689">
    <property type="entry name" value="SAM_RNA_A_N6_MT"/>
    <property type="match status" value="1"/>
</dbReference>
<reference key="1">
    <citation type="journal article" date="2009" name="BMC Genomics">
        <title>Conservation in the face of diversity: multistrain analysis of an intracellular bacterium.</title>
        <authorList>
            <person name="Dark M.J."/>
            <person name="Herndon D.R."/>
            <person name="Kappmeyer L.S."/>
            <person name="Gonzales M.P."/>
            <person name="Nordeen E."/>
            <person name="Palmer G.H."/>
            <person name="Knowles D.P. Jr."/>
            <person name="Brayton K.A."/>
        </authorList>
    </citation>
    <scope>NUCLEOTIDE SEQUENCE [LARGE SCALE GENOMIC DNA]</scope>
    <source>
        <strain>Florida</strain>
    </source>
</reference>
<proteinExistence type="inferred from homology"/>
<feature type="chain" id="PRO_1000194377" description="Ribosomal RNA small subunit methyltransferase A">
    <location>
        <begin position="1"/>
        <end position="270"/>
    </location>
</feature>
<feature type="binding site" evidence="1">
    <location>
        <position position="15"/>
    </location>
    <ligand>
        <name>S-adenosyl-L-methionine</name>
        <dbReference type="ChEBI" id="CHEBI:59789"/>
    </ligand>
</feature>
<feature type="binding site" evidence="1">
    <location>
        <position position="17"/>
    </location>
    <ligand>
        <name>S-adenosyl-L-methionine</name>
        <dbReference type="ChEBI" id="CHEBI:59789"/>
    </ligand>
</feature>
<feature type="binding site" evidence="1">
    <location>
        <position position="42"/>
    </location>
    <ligand>
        <name>S-adenosyl-L-methionine</name>
        <dbReference type="ChEBI" id="CHEBI:59789"/>
    </ligand>
</feature>
<feature type="binding site" evidence="1">
    <location>
        <position position="64"/>
    </location>
    <ligand>
        <name>S-adenosyl-L-methionine</name>
        <dbReference type="ChEBI" id="CHEBI:59789"/>
    </ligand>
</feature>
<feature type="binding site" evidence="1">
    <location>
        <position position="89"/>
    </location>
    <ligand>
        <name>S-adenosyl-L-methionine</name>
        <dbReference type="ChEBI" id="CHEBI:59789"/>
    </ligand>
</feature>
<feature type="binding site" evidence="1">
    <location>
        <position position="108"/>
    </location>
    <ligand>
        <name>S-adenosyl-L-methionine</name>
        <dbReference type="ChEBI" id="CHEBI:59789"/>
    </ligand>
</feature>
<evidence type="ECO:0000255" key="1">
    <source>
        <dbReference type="HAMAP-Rule" id="MF_00607"/>
    </source>
</evidence>
<gene>
    <name evidence="1" type="primary">rsmA</name>
    <name evidence="1" type="synonym">ksgA</name>
    <name type="ordered locus">AMF_415</name>
</gene>
<name>RSMA_ANAMF</name>
<sequence>MRTIRHKAYKSLGQNFILDPSMAEKIVSYAGSIEGYNIIEVGPGFGTMTEIILRSKVASLLAIEKDRRLSPMHKGLMQKYPNYRYIEHDVLEINLETMISAPSKMIANLPYNISVILLLRMLKYIHNFEKLTLMFQKEVAERLVAKPGTKSYSILSVLVQLLCDVEKVKDLQPGAFSPPPKVCSSVVNITPLGNLRFPVDYSYMLKMLKKAFGCKRKTVRNALGLPHQEFDALLAECRIPPSVRAENLSVEQLCAVSNFLQSRQYQFSTG</sequence>
<organism>
    <name type="scientific">Anaplasma marginale (strain Florida)</name>
    <dbReference type="NCBI Taxonomy" id="320483"/>
    <lineage>
        <taxon>Bacteria</taxon>
        <taxon>Pseudomonadati</taxon>
        <taxon>Pseudomonadota</taxon>
        <taxon>Alphaproteobacteria</taxon>
        <taxon>Rickettsiales</taxon>
        <taxon>Anaplasmataceae</taxon>
        <taxon>Anaplasma</taxon>
    </lineage>
</organism>
<keyword id="KW-0963">Cytoplasm</keyword>
<keyword id="KW-0489">Methyltransferase</keyword>
<keyword id="KW-1185">Reference proteome</keyword>
<keyword id="KW-0694">RNA-binding</keyword>
<keyword id="KW-0698">rRNA processing</keyword>
<keyword id="KW-0949">S-adenosyl-L-methionine</keyword>
<keyword id="KW-0808">Transferase</keyword>